<accession>O54608</accession>
<organism>
    <name type="scientific">Halobacterium salinarum (strain ATCC 700922 / JCM 11081 / NRC-1)</name>
    <name type="common">Halobacterium halobium</name>
    <dbReference type="NCBI Taxonomy" id="64091"/>
    <lineage>
        <taxon>Archaea</taxon>
        <taxon>Methanobacteriati</taxon>
        <taxon>Methanobacteriota</taxon>
        <taxon>Stenosarchaea group</taxon>
        <taxon>Halobacteria</taxon>
        <taxon>Halobacteriales</taxon>
        <taxon>Halobacteriaceae</taxon>
        <taxon>Halobacterium</taxon>
        <taxon>Halobacterium salinarum NRC-34001</taxon>
    </lineage>
</organism>
<feature type="chain" id="PRO_0000159079" description="Putative sulfur carrier protein VNG_5061C/VNG_5236C/VNG_6059C/VNG_6467C">
    <location>
        <begin position="1"/>
        <end position="81"/>
    </location>
</feature>
<feature type="active site" description="Cysteine persulfide intermediate" evidence="1">
    <location>
        <position position="18"/>
    </location>
</feature>
<sequence>MSADYDITETLDVKGASCPMPVVKTKSAIDDLAEGEILEVLATDSGSMSDIDGWASGTAGVELVDQEEGDDVYKHYVRKTK</sequence>
<gene>
    <name type="ordered locus">VNG_5061C</name>
    <name type="ORF">H0532</name>
</gene>
<gene>
    <name type="ordered locus">VNG_5236C</name>
    <name type="ORF">H1831</name>
</gene>
<gene>
    <name type="ordered locus">VNG_6059C</name>
</gene>
<gene>
    <name type="ordered locus">VNG_6467C</name>
</gene>
<name>Y3061_HALSA</name>
<comment type="similarity">
    <text evidence="2">Belongs to the sulfur carrier protein TusA family.</text>
</comment>
<evidence type="ECO:0000250" key="1">
    <source>
        <dbReference type="UniProtKB" id="P0A890"/>
    </source>
</evidence>
<evidence type="ECO:0000305" key="2"/>
<proteinExistence type="inferred from homology"/>
<keyword id="KW-0614">Plasmid</keyword>
<keyword id="KW-1185">Reference proteome</keyword>
<protein>
    <recommendedName>
        <fullName>Putative sulfur carrier protein VNG_5061C/VNG_5236C/VNG_6059C/VNG_6467C</fullName>
    </recommendedName>
</protein>
<dbReference type="EMBL" id="AF016485">
    <property type="protein sequence ID" value="AAC82826.1"/>
    <property type="molecule type" value="Genomic_DNA"/>
</dbReference>
<dbReference type="EMBL" id="AF016485">
    <property type="protein sequence ID" value="AAC82951.1"/>
    <property type="molecule type" value="Genomic_DNA"/>
</dbReference>
<dbReference type="EMBL" id="AE004438">
    <property type="protein sequence ID" value="AAG20749.1"/>
    <property type="molecule type" value="Genomic_DNA"/>
</dbReference>
<dbReference type="EMBL" id="AE004438">
    <property type="protein sequence ID" value="AAG21059.1"/>
    <property type="molecule type" value="Genomic_DNA"/>
</dbReference>
<dbReference type="PIR" id="T08259">
    <property type="entry name" value="T08259"/>
</dbReference>
<dbReference type="RefSeq" id="WP_010890415.1">
    <property type="nucleotide sequence ID" value="NC_001869.1"/>
</dbReference>
<dbReference type="SMR" id="O54608"/>
<dbReference type="FunCoup" id="O54608">
    <property type="interactions" value="4"/>
</dbReference>
<dbReference type="GeneID" id="5955104"/>
<dbReference type="KEGG" id="hal:AAC82826.1"/>
<dbReference type="KEGG" id="hal:AAC82951.1"/>
<dbReference type="KEGG" id="hal:VNG_6059C"/>
<dbReference type="KEGG" id="hal:VNG_6467C"/>
<dbReference type="PATRIC" id="fig|64091.14.peg.2121"/>
<dbReference type="HOGENOM" id="CLU_165255_1_1_2"/>
<dbReference type="InParanoid" id="O54608"/>
<dbReference type="OrthoDB" id="45650at2157"/>
<dbReference type="PhylomeDB" id="O54608"/>
<dbReference type="Proteomes" id="UP000000554">
    <property type="component" value="Plasmid pNRC100"/>
</dbReference>
<dbReference type="Proteomes" id="UP000000554">
    <property type="component" value="Plasmid pNRC200"/>
</dbReference>
<dbReference type="CDD" id="cd00291">
    <property type="entry name" value="SirA_YedF_YeeD"/>
    <property type="match status" value="1"/>
</dbReference>
<dbReference type="Gene3D" id="3.30.110.40">
    <property type="entry name" value="TusA-like domain"/>
    <property type="match status" value="1"/>
</dbReference>
<dbReference type="InterPro" id="IPR001455">
    <property type="entry name" value="TusA-like"/>
</dbReference>
<dbReference type="InterPro" id="IPR036868">
    <property type="entry name" value="TusA-like_sf"/>
</dbReference>
<dbReference type="PANTHER" id="PTHR33279">
    <property type="entry name" value="SULFUR CARRIER PROTEIN YEDF-RELATED"/>
    <property type="match status" value="1"/>
</dbReference>
<dbReference type="PANTHER" id="PTHR33279:SF6">
    <property type="entry name" value="SULFUR CARRIER PROTEIN YEDF-RELATED"/>
    <property type="match status" value="1"/>
</dbReference>
<dbReference type="Pfam" id="PF01206">
    <property type="entry name" value="TusA"/>
    <property type="match status" value="1"/>
</dbReference>
<dbReference type="SUPFAM" id="SSF64307">
    <property type="entry name" value="SirA-like"/>
    <property type="match status" value="1"/>
</dbReference>
<dbReference type="PROSITE" id="PS01148">
    <property type="entry name" value="UPF0033"/>
    <property type="match status" value="1"/>
</dbReference>
<reference key="1">
    <citation type="journal article" date="1998" name="Genome Res.">
        <title>Snapshot of a large dynamic replicon in a halophilic archaeon: megaplasmid or minichromosome?</title>
        <authorList>
            <person name="Ng W.V."/>
            <person name="Ciufo S.A."/>
            <person name="Smith T.M."/>
            <person name="Bumgarner R.E."/>
            <person name="Baskin D."/>
            <person name="Faust J."/>
            <person name="Hall B."/>
            <person name="Loretz C."/>
            <person name="Seto J."/>
            <person name="Slagel J."/>
            <person name="Hood L."/>
            <person name="DasSarma S."/>
        </authorList>
    </citation>
    <scope>NUCLEOTIDE SEQUENCE [LARGE SCALE GENOMIC DNA]</scope>
    <source>
        <strain>ATCC 700922 / JCM 11081 / NRC-1</strain>
        <plasmid>pNRC100</plasmid>
    </source>
</reference>
<reference key="2">
    <citation type="journal article" date="2000" name="Proc. Natl. Acad. Sci. U.S.A.">
        <title>Genome sequence of Halobacterium species NRC-1.</title>
        <authorList>
            <person name="Ng W.V."/>
            <person name="Kennedy S.P."/>
            <person name="Mahairas G.G."/>
            <person name="Berquist B."/>
            <person name="Pan M."/>
            <person name="Shukla H.D."/>
            <person name="Lasky S.R."/>
            <person name="Baliga N.S."/>
            <person name="Thorsson V."/>
            <person name="Sbrogna J."/>
            <person name="Swartzell S."/>
            <person name="Weir D."/>
            <person name="Hall J."/>
            <person name="Dahl T.A."/>
            <person name="Welti R."/>
            <person name="Goo Y.A."/>
            <person name="Leithauser B."/>
            <person name="Keller K."/>
            <person name="Cruz R."/>
            <person name="Danson M.J."/>
            <person name="Hough D.W."/>
            <person name="Maddocks D.G."/>
            <person name="Jablonski P.E."/>
            <person name="Krebs M.P."/>
            <person name="Angevine C.M."/>
            <person name="Dale H."/>
            <person name="Isenbarger T.A."/>
            <person name="Peck R.F."/>
            <person name="Pohlschroder M."/>
            <person name="Spudich J.L."/>
            <person name="Jung K.-H."/>
            <person name="Alam M."/>
            <person name="Freitas T."/>
            <person name="Hou S."/>
            <person name="Daniels C.J."/>
            <person name="Dennis P.P."/>
            <person name="Omer A.D."/>
            <person name="Ebhardt H."/>
            <person name="Lowe T.M."/>
            <person name="Liang P."/>
            <person name="Riley M."/>
            <person name="Hood L."/>
            <person name="DasSarma S."/>
        </authorList>
    </citation>
    <scope>NUCLEOTIDE SEQUENCE [LARGE SCALE GENOMIC DNA]</scope>
    <source>
        <strain>ATCC 700922 / JCM 11081 / NRC-1</strain>
        <plasmid>pNRC200</plasmid>
    </source>
</reference>
<geneLocation type="plasmid">
    <name>pNRC100</name>
</geneLocation>
<geneLocation type="plasmid">
    <name>pNRC200</name>
</geneLocation>